<proteinExistence type="inferred from homology"/>
<sequence length="276" mass="30604">MHPAAEHSPLGKSSEYIATYSPEQLFPIPRTAKWAELGVTAQTLPWQGVDYWNCFELSWLLPSGKPVVAIGEFAIPADSPNIIESKSFKLYLNSLNQTVFASLDALQACLEKDLSAAAGKPVGVKVRTLAEVEAQGVVALPGQCIDALDVAISNYEQPQPELLRCDPARVVEETLHSHLLKSNCPVTGQPDWGSVVVEYKGRALDHASLLTYLISFRQHADFHEQCVERIYLDLKNLLQPEHLTVYARYVRRGGLDINPYRSTGAISPDNKRLVRQ</sequence>
<gene>
    <name evidence="1" type="primary">queF</name>
    <name type="ordered locus">Pput_3582</name>
</gene>
<accession>A5W6E6</accession>
<protein>
    <recommendedName>
        <fullName evidence="1">NADPH-dependent 7-cyano-7-deazaguanine reductase</fullName>
        <ecNumber evidence="1">1.7.1.13</ecNumber>
    </recommendedName>
    <alternativeName>
        <fullName evidence="1">7-cyano-7-carbaguanine reductase</fullName>
    </alternativeName>
    <alternativeName>
        <fullName evidence="1">NADPH-dependent nitrile oxidoreductase</fullName>
    </alternativeName>
    <alternativeName>
        <fullName evidence="1">PreQ(0) reductase</fullName>
    </alternativeName>
</protein>
<reference key="1">
    <citation type="submission" date="2007-05" db="EMBL/GenBank/DDBJ databases">
        <title>Complete sequence of Pseudomonas putida F1.</title>
        <authorList>
            <consortium name="US DOE Joint Genome Institute"/>
            <person name="Copeland A."/>
            <person name="Lucas S."/>
            <person name="Lapidus A."/>
            <person name="Barry K."/>
            <person name="Detter J.C."/>
            <person name="Glavina del Rio T."/>
            <person name="Hammon N."/>
            <person name="Israni S."/>
            <person name="Dalin E."/>
            <person name="Tice H."/>
            <person name="Pitluck S."/>
            <person name="Chain P."/>
            <person name="Malfatti S."/>
            <person name="Shin M."/>
            <person name="Vergez L."/>
            <person name="Schmutz J."/>
            <person name="Larimer F."/>
            <person name="Land M."/>
            <person name="Hauser L."/>
            <person name="Kyrpides N."/>
            <person name="Lykidis A."/>
            <person name="Parales R."/>
            <person name="Richardson P."/>
        </authorList>
    </citation>
    <scope>NUCLEOTIDE SEQUENCE [LARGE SCALE GENOMIC DNA]</scope>
    <source>
        <strain>ATCC 700007 / DSM 6899 / JCM 31910 / BCRC 17059 / LMG 24140 / F1</strain>
    </source>
</reference>
<dbReference type="EC" id="1.7.1.13" evidence="1"/>
<dbReference type="EMBL" id="CP000712">
    <property type="protein sequence ID" value="ABQ79706.1"/>
    <property type="molecule type" value="Genomic_DNA"/>
</dbReference>
<dbReference type="SMR" id="A5W6E6"/>
<dbReference type="KEGG" id="ppf:Pput_3582"/>
<dbReference type="eggNOG" id="COG0780">
    <property type="taxonomic scope" value="Bacteria"/>
</dbReference>
<dbReference type="eggNOG" id="COG2904">
    <property type="taxonomic scope" value="Bacteria"/>
</dbReference>
<dbReference type="HOGENOM" id="CLU_054738_0_0_6"/>
<dbReference type="UniPathway" id="UPA00392"/>
<dbReference type="GO" id="GO:0005737">
    <property type="term" value="C:cytoplasm"/>
    <property type="evidence" value="ECO:0007669"/>
    <property type="project" value="UniProtKB-SubCell"/>
</dbReference>
<dbReference type="GO" id="GO:0033739">
    <property type="term" value="F:preQ1 synthase activity"/>
    <property type="evidence" value="ECO:0007669"/>
    <property type="project" value="UniProtKB-UniRule"/>
</dbReference>
<dbReference type="GO" id="GO:0008616">
    <property type="term" value="P:queuosine biosynthetic process"/>
    <property type="evidence" value="ECO:0007669"/>
    <property type="project" value="UniProtKB-UniRule"/>
</dbReference>
<dbReference type="GO" id="GO:0006400">
    <property type="term" value="P:tRNA modification"/>
    <property type="evidence" value="ECO:0007669"/>
    <property type="project" value="UniProtKB-UniRule"/>
</dbReference>
<dbReference type="Gene3D" id="3.30.1130.10">
    <property type="match status" value="2"/>
</dbReference>
<dbReference type="HAMAP" id="MF_00817">
    <property type="entry name" value="QueF_type2"/>
    <property type="match status" value="1"/>
</dbReference>
<dbReference type="InterPro" id="IPR043133">
    <property type="entry name" value="GTP-CH-I_C/QueF"/>
</dbReference>
<dbReference type="InterPro" id="IPR050084">
    <property type="entry name" value="NADPH_dep_7-cyano-7-deazaG_red"/>
</dbReference>
<dbReference type="InterPro" id="IPR029500">
    <property type="entry name" value="QueF"/>
</dbReference>
<dbReference type="InterPro" id="IPR029139">
    <property type="entry name" value="QueF_N"/>
</dbReference>
<dbReference type="InterPro" id="IPR016428">
    <property type="entry name" value="QueF_type2"/>
</dbReference>
<dbReference type="NCBIfam" id="TIGR03138">
    <property type="entry name" value="QueF"/>
    <property type="match status" value="1"/>
</dbReference>
<dbReference type="PANTHER" id="PTHR34354">
    <property type="entry name" value="NADPH-DEPENDENT 7-CYANO-7-DEAZAGUANINE REDUCTASE"/>
    <property type="match status" value="1"/>
</dbReference>
<dbReference type="PANTHER" id="PTHR34354:SF1">
    <property type="entry name" value="NADPH-DEPENDENT 7-CYANO-7-DEAZAGUANINE REDUCTASE"/>
    <property type="match status" value="1"/>
</dbReference>
<dbReference type="Pfam" id="PF14489">
    <property type="entry name" value="QueF"/>
    <property type="match status" value="1"/>
</dbReference>
<dbReference type="Pfam" id="PF14819">
    <property type="entry name" value="QueF_N"/>
    <property type="match status" value="1"/>
</dbReference>
<dbReference type="PIRSF" id="PIRSF004750">
    <property type="entry name" value="Nitrile_oxidored_YqcD_prd"/>
    <property type="match status" value="1"/>
</dbReference>
<dbReference type="SUPFAM" id="SSF55620">
    <property type="entry name" value="Tetrahydrobiopterin biosynthesis enzymes-like"/>
    <property type="match status" value="1"/>
</dbReference>
<evidence type="ECO:0000255" key="1">
    <source>
        <dbReference type="HAMAP-Rule" id="MF_00817"/>
    </source>
</evidence>
<organism>
    <name type="scientific">Pseudomonas putida (strain ATCC 700007 / DSM 6899 / JCM 31910 / BCRC 17059 / LMG 24140 / F1)</name>
    <dbReference type="NCBI Taxonomy" id="351746"/>
    <lineage>
        <taxon>Bacteria</taxon>
        <taxon>Pseudomonadati</taxon>
        <taxon>Pseudomonadota</taxon>
        <taxon>Gammaproteobacteria</taxon>
        <taxon>Pseudomonadales</taxon>
        <taxon>Pseudomonadaceae</taxon>
        <taxon>Pseudomonas</taxon>
    </lineage>
</organism>
<feature type="chain" id="PRO_1000062354" description="NADPH-dependent 7-cyano-7-deazaguanine reductase">
    <location>
        <begin position="1"/>
        <end position="276"/>
    </location>
</feature>
<feature type="active site" description="Thioimide intermediate" evidence="1">
    <location>
        <position position="184"/>
    </location>
</feature>
<feature type="active site" description="Proton donor" evidence="1">
    <location>
        <position position="191"/>
    </location>
</feature>
<feature type="binding site" evidence="1">
    <location>
        <begin position="83"/>
        <end position="85"/>
    </location>
    <ligand>
        <name>substrate</name>
    </ligand>
</feature>
<feature type="binding site" evidence="1">
    <location>
        <begin position="85"/>
        <end position="86"/>
    </location>
    <ligand>
        <name>NADPH</name>
        <dbReference type="ChEBI" id="CHEBI:57783"/>
    </ligand>
</feature>
<feature type="binding site" evidence="1">
    <location>
        <begin position="223"/>
        <end position="224"/>
    </location>
    <ligand>
        <name>substrate</name>
    </ligand>
</feature>
<feature type="binding site" evidence="1">
    <location>
        <begin position="252"/>
        <end position="253"/>
    </location>
    <ligand>
        <name>NADPH</name>
        <dbReference type="ChEBI" id="CHEBI:57783"/>
    </ligand>
</feature>
<comment type="function">
    <text evidence="1">Catalyzes the NADPH-dependent reduction of 7-cyano-7-deazaguanine (preQ0) to 7-aminomethyl-7-deazaguanine (preQ1).</text>
</comment>
<comment type="catalytic activity">
    <reaction evidence="1">
        <text>7-aminomethyl-7-carbaguanine + 2 NADP(+) = 7-cyano-7-deazaguanine + 2 NADPH + 3 H(+)</text>
        <dbReference type="Rhea" id="RHEA:13409"/>
        <dbReference type="ChEBI" id="CHEBI:15378"/>
        <dbReference type="ChEBI" id="CHEBI:45075"/>
        <dbReference type="ChEBI" id="CHEBI:57783"/>
        <dbReference type="ChEBI" id="CHEBI:58349"/>
        <dbReference type="ChEBI" id="CHEBI:58703"/>
        <dbReference type="EC" id="1.7.1.13"/>
    </reaction>
</comment>
<comment type="pathway">
    <text evidence="1">tRNA modification; tRNA-queuosine biosynthesis.</text>
</comment>
<comment type="subunit">
    <text evidence="1">Homodimer.</text>
</comment>
<comment type="subcellular location">
    <subcellularLocation>
        <location evidence="1">Cytoplasm</location>
    </subcellularLocation>
</comment>
<comment type="similarity">
    <text evidence="1">Belongs to the GTP cyclohydrolase I family. QueF type 2 subfamily.</text>
</comment>
<keyword id="KW-0963">Cytoplasm</keyword>
<keyword id="KW-0521">NADP</keyword>
<keyword id="KW-0560">Oxidoreductase</keyword>
<keyword id="KW-0671">Queuosine biosynthesis</keyword>
<name>QUEF_PSEP1</name>